<dbReference type="EC" id="3.4.22.29" evidence="2"/>
<dbReference type="EC" id="3.6.1.15" evidence="2"/>
<dbReference type="EC" id="3.4.22.28" evidence="12"/>
<dbReference type="EC" id="2.7.7.48" evidence="10"/>
<dbReference type="EMBL" id="D00214">
    <property type="protein sequence ID" value="BAA24003.1"/>
    <property type="status" value="ALT_SEQ"/>
    <property type="molecule type" value="Genomic_RNA"/>
</dbReference>
<dbReference type="PIR" id="A29824">
    <property type="entry name" value="GNNYBE"/>
</dbReference>
<dbReference type="RefSeq" id="NP_045756.1">
    <property type="nucleotide sequence ID" value="NC_001859.1"/>
</dbReference>
<dbReference type="PDB" id="1BEV">
    <property type="method" value="X-ray"/>
    <property type="resolution" value="3.00 A"/>
    <property type="chains" value="1=560-840, 2=70-317, 3=318-559, 4=2-69"/>
</dbReference>
<dbReference type="PDBsum" id="1BEV"/>
<dbReference type="EMDB" id="EMD-10504"/>
<dbReference type="EMDB" id="EMD-10506"/>
<dbReference type="SMR" id="P12915"/>
<dbReference type="DrugBank" id="DB08231">
    <property type="generic name" value="Myristic acid"/>
</dbReference>
<dbReference type="MEROPS" id="C03.014"/>
<dbReference type="MEROPS" id="C03.020"/>
<dbReference type="MEROPS" id="N08.001"/>
<dbReference type="GeneID" id="1493914"/>
<dbReference type="KEGG" id="vg:1493914"/>
<dbReference type="EvolutionaryTrace" id="P12915"/>
<dbReference type="Proteomes" id="UP000006566">
    <property type="component" value="Segment"/>
</dbReference>
<dbReference type="GO" id="GO:0044162">
    <property type="term" value="C:host cell cytoplasmic vesicle membrane"/>
    <property type="evidence" value="ECO:0007669"/>
    <property type="project" value="UniProtKB-SubCell"/>
</dbReference>
<dbReference type="GO" id="GO:0042025">
    <property type="term" value="C:host cell nucleus"/>
    <property type="evidence" value="ECO:0007669"/>
    <property type="project" value="UniProtKB-SubCell"/>
</dbReference>
<dbReference type="GO" id="GO:0016020">
    <property type="term" value="C:membrane"/>
    <property type="evidence" value="ECO:0007669"/>
    <property type="project" value="UniProtKB-KW"/>
</dbReference>
<dbReference type="GO" id="GO:0039618">
    <property type="term" value="C:T=pseudo3 icosahedral viral capsid"/>
    <property type="evidence" value="ECO:0007669"/>
    <property type="project" value="UniProtKB-KW"/>
</dbReference>
<dbReference type="GO" id="GO:0005524">
    <property type="term" value="F:ATP binding"/>
    <property type="evidence" value="ECO:0007669"/>
    <property type="project" value="UniProtKB-KW"/>
</dbReference>
<dbReference type="GO" id="GO:0015267">
    <property type="term" value="F:channel activity"/>
    <property type="evidence" value="ECO:0007669"/>
    <property type="project" value="UniProtKB-KW"/>
</dbReference>
<dbReference type="GO" id="GO:0004197">
    <property type="term" value="F:cysteine-type endopeptidase activity"/>
    <property type="evidence" value="ECO:0007669"/>
    <property type="project" value="UniProtKB-EC"/>
</dbReference>
<dbReference type="GO" id="GO:0017111">
    <property type="term" value="F:ribonucleoside triphosphate phosphatase activity"/>
    <property type="evidence" value="ECO:0007669"/>
    <property type="project" value="UniProtKB-EC"/>
</dbReference>
<dbReference type="GO" id="GO:0003723">
    <property type="term" value="F:RNA binding"/>
    <property type="evidence" value="ECO:0007669"/>
    <property type="project" value="UniProtKB-KW"/>
</dbReference>
<dbReference type="GO" id="GO:0003724">
    <property type="term" value="F:RNA helicase activity"/>
    <property type="evidence" value="ECO:0007669"/>
    <property type="project" value="InterPro"/>
</dbReference>
<dbReference type="GO" id="GO:0003968">
    <property type="term" value="F:RNA-directed RNA polymerase activity"/>
    <property type="evidence" value="ECO:0007669"/>
    <property type="project" value="UniProtKB-KW"/>
</dbReference>
<dbReference type="GO" id="GO:0005198">
    <property type="term" value="F:structural molecule activity"/>
    <property type="evidence" value="ECO:0007669"/>
    <property type="project" value="InterPro"/>
</dbReference>
<dbReference type="GO" id="GO:0008270">
    <property type="term" value="F:zinc ion binding"/>
    <property type="evidence" value="ECO:0007669"/>
    <property type="project" value="UniProtKB-KW"/>
</dbReference>
<dbReference type="GO" id="GO:0006260">
    <property type="term" value="P:DNA replication"/>
    <property type="evidence" value="ECO:0007669"/>
    <property type="project" value="UniProtKB-KW"/>
</dbReference>
<dbReference type="GO" id="GO:0006351">
    <property type="term" value="P:DNA-templated transcription"/>
    <property type="evidence" value="ECO:0007669"/>
    <property type="project" value="InterPro"/>
</dbReference>
<dbReference type="GO" id="GO:0075509">
    <property type="term" value="P:endocytosis involved in viral entry into host cell"/>
    <property type="evidence" value="ECO:0007669"/>
    <property type="project" value="UniProtKB-KW"/>
</dbReference>
<dbReference type="GO" id="GO:0034220">
    <property type="term" value="P:monoatomic ion transmembrane transport"/>
    <property type="evidence" value="ECO:0007669"/>
    <property type="project" value="UniProtKB-KW"/>
</dbReference>
<dbReference type="GO" id="GO:0006508">
    <property type="term" value="P:proteolysis"/>
    <property type="evidence" value="ECO:0007669"/>
    <property type="project" value="UniProtKB-KW"/>
</dbReference>
<dbReference type="GO" id="GO:0044694">
    <property type="term" value="P:symbiont genome entry into host cell via pore formation in plasma membrane"/>
    <property type="evidence" value="ECO:0007669"/>
    <property type="project" value="UniProtKB-KW"/>
</dbReference>
<dbReference type="GO" id="GO:0039520">
    <property type="term" value="P:symbiont-mediated activation of host autophagy"/>
    <property type="evidence" value="ECO:0000250"/>
    <property type="project" value="UniProtKB"/>
</dbReference>
<dbReference type="GO" id="GO:0039540">
    <property type="term" value="P:symbiont-mediated suppression of host cytoplasmic pattern recognition receptor signaling pathway via inhibition of RIG-I activity"/>
    <property type="evidence" value="ECO:0007669"/>
    <property type="project" value="UniProtKB-KW"/>
</dbReference>
<dbReference type="GO" id="GO:0039522">
    <property type="term" value="P:symbiont-mediated suppression of host mRNA export from nucleus"/>
    <property type="evidence" value="ECO:0007669"/>
    <property type="project" value="UniProtKB-KW"/>
</dbReference>
<dbReference type="GO" id="GO:0039694">
    <property type="term" value="P:viral RNA genome replication"/>
    <property type="evidence" value="ECO:0007669"/>
    <property type="project" value="InterPro"/>
</dbReference>
<dbReference type="GO" id="GO:0019062">
    <property type="term" value="P:virion attachment to host cell"/>
    <property type="evidence" value="ECO:0007669"/>
    <property type="project" value="UniProtKB-KW"/>
</dbReference>
<dbReference type="CDD" id="cd00205">
    <property type="entry name" value="rhv_like"/>
    <property type="match status" value="3"/>
</dbReference>
<dbReference type="FunFam" id="1.20.960.20:FF:000001">
    <property type="entry name" value="Genome polyprotein"/>
    <property type="match status" value="1"/>
</dbReference>
<dbReference type="FunFam" id="2.40.10.10:FF:000018">
    <property type="entry name" value="Genome polyprotein"/>
    <property type="match status" value="1"/>
</dbReference>
<dbReference type="FunFam" id="2.40.10.10:FF:000020">
    <property type="entry name" value="Genome polyprotein"/>
    <property type="match status" value="1"/>
</dbReference>
<dbReference type="FunFam" id="2.60.120.20:FF:000003">
    <property type="entry name" value="Genome polyprotein"/>
    <property type="match status" value="1"/>
</dbReference>
<dbReference type="FunFam" id="2.60.120.20:FF:000020">
    <property type="entry name" value="Genome polyprotein"/>
    <property type="match status" value="1"/>
</dbReference>
<dbReference type="FunFam" id="3.30.70.270:FF:000008">
    <property type="entry name" value="Genome polyprotein"/>
    <property type="match status" value="1"/>
</dbReference>
<dbReference type="FunFam" id="4.10.880.10:FF:000002">
    <property type="entry name" value="Genome polyprotein"/>
    <property type="match status" value="1"/>
</dbReference>
<dbReference type="Gene3D" id="1.20.960.20">
    <property type="match status" value="1"/>
</dbReference>
<dbReference type="Gene3D" id="2.40.10.120">
    <property type="match status" value="1"/>
</dbReference>
<dbReference type="Gene3D" id="2.60.120.20">
    <property type="match status" value="3"/>
</dbReference>
<dbReference type="Gene3D" id="3.30.70.270">
    <property type="match status" value="1"/>
</dbReference>
<dbReference type="Gene3D" id="6.10.20.20">
    <property type="entry name" value="Poliovirus 3A protein-like"/>
    <property type="match status" value="1"/>
</dbReference>
<dbReference type="Gene3D" id="4.10.880.10">
    <property type="entry name" value="Poliovirus 3D polymerase Domain 1 (Nucleotidyltransferase)"/>
    <property type="match status" value="2"/>
</dbReference>
<dbReference type="Gene3D" id="2.40.10.10">
    <property type="entry name" value="Trypsin-like serine proteases"/>
    <property type="match status" value="2"/>
</dbReference>
<dbReference type="InterPro" id="IPR043502">
    <property type="entry name" value="DNA/RNA_pol_sf"/>
</dbReference>
<dbReference type="InterPro" id="IPR004004">
    <property type="entry name" value="Helic/Pol/Pept_Calicivir-typ"/>
</dbReference>
<dbReference type="InterPro" id="IPR000605">
    <property type="entry name" value="Helicase_SF3_ssDNA/RNA_vir"/>
</dbReference>
<dbReference type="InterPro" id="IPR014759">
    <property type="entry name" value="Helicase_SF3_ssRNA_vir"/>
</dbReference>
<dbReference type="InterPro" id="IPR027417">
    <property type="entry name" value="P-loop_NTPase"/>
</dbReference>
<dbReference type="InterPro" id="IPR014838">
    <property type="entry name" value="P3A"/>
</dbReference>
<dbReference type="InterPro" id="IPR036203">
    <property type="entry name" value="P3A_soluble_dom"/>
</dbReference>
<dbReference type="InterPro" id="IPR044067">
    <property type="entry name" value="PCV_3C_PRO"/>
</dbReference>
<dbReference type="InterPro" id="IPR000081">
    <property type="entry name" value="Peptidase_C3"/>
</dbReference>
<dbReference type="InterPro" id="IPR000199">
    <property type="entry name" value="Peptidase_C3A/C3B_picornavir"/>
</dbReference>
<dbReference type="InterPro" id="IPR009003">
    <property type="entry name" value="Peptidase_S1_PA"/>
</dbReference>
<dbReference type="InterPro" id="IPR043504">
    <property type="entry name" value="Peptidase_S1_PA_chymotrypsin"/>
</dbReference>
<dbReference type="InterPro" id="IPR003138">
    <property type="entry name" value="Pico_P1A"/>
</dbReference>
<dbReference type="InterPro" id="IPR002527">
    <property type="entry name" value="Pico_P2B"/>
</dbReference>
<dbReference type="InterPro" id="IPR001676">
    <property type="entry name" value="Picornavirus_capsid"/>
</dbReference>
<dbReference type="InterPro" id="IPR043128">
    <property type="entry name" value="Rev_trsase/Diguanyl_cyclase"/>
</dbReference>
<dbReference type="InterPro" id="IPR033703">
    <property type="entry name" value="Rhv-like"/>
</dbReference>
<dbReference type="InterPro" id="IPR001205">
    <property type="entry name" value="RNA-dir_pol_C"/>
</dbReference>
<dbReference type="InterPro" id="IPR007094">
    <property type="entry name" value="RNA-dir_pol_PSvirus"/>
</dbReference>
<dbReference type="InterPro" id="IPR029053">
    <property type="entry name" value="Viral_coat"/>
</dbReference>
<dbReference type="Pfam" id="PF08727">
    <property type="entry name" value="P3A"/>
    <property type="match status" value="1"/>
</dbReference>
<dbReference type="Pfam" id="PF00548">
    <property type="entry name" value="Peptidase_C3"/>
    <property type="match status" value="1"/>
</dbReference>
<dbReference type="Pfam" id="PF02226">
    <property type="entry name" value="Pico_P1A"/>
    <property type="match status" value="1"/>
</dbReference>
<dbReference type="Pfam" id="PF00947">
    <property type="entry name" value="Pico_P2A"/>
    <property type="match status" value="1"/>
</dbReference>
<dbReference type="Pfam" id="PF01552">
    <property type="entry name" value="Pico_P2B"/>
    <property type="match status" value="1"/>
</dbReference>
<dbReference type="Pfam" id="PF00680">
    <property type="entry name" value="RdRP_1"/>
    <property type="match status" value="1"/>
</dbReference>
<dbReference type="Pfam" id="PF00073">
    <property type="entry name" value="Rhv"/>
    <property type="match status" value="2"/>
</dbReference>
<dbReference type="Pfam" id="PF22663">
    <property type="entry name" value="Rhv_5"/>
    <property type="match status" value="1"/>
</dbReference>
<dbReference type="Pfam" id="PF00910">
    <property type="entry name" value="RNA_helicase"/>
    <property type="match status" value="1"/>
</dbReference>
<dbReference type="PRINTS" id="PR00918">
    <property type="entry name" value="CALICVIRUSNS"/>
</dbReference>
<dbReference type="SUPFAM" id="SSF56672">
    <property type="entry name" value="DNA/RNA polymerases"/>
    <property type="match status" value="1"/>
</dbReference>
<dbReference type="SUPFAM" id="SSF52540">
    <property type="entry name" value="P-loop containing nucleoside triphosphate hydrolases"/>
    <property type="match status" value="1"/>
</dbReference>
<dbReference type="SUPFAM" id="SSF88633">
    <property type="entry name" value="Positive stranded ssRNA viruses"/>
    <property type="match status" value="2"/>
</dbReference>
<dbReference type="SUPFAM" id="SSF89043">
    <property type="entry name" value="Soluble domain of poliovirus core protein 3a"/>
    <property type="match status" value="1"/>
</dbReference>
<dbReference type="SUPFAM" id="SSF50494">
    <property type="entry name" value="Trypsin-like serine proteases"/>
    <property type="match status" value="2"/>
</dbReference>
<dbReference type="PROSITE" id="PS51874">
    <property type="entry name" value="PCV_3C_PRO"/>
    <property type="match status" value="1"/>
</dbReference>
<dbReference type="PROSITE" id="PS50507">
    <property type="entry name" value="RDRP_SSRNA_POS"/>
    <property type="match status" value="1"/>
</dbReference>
<dbReference type="PROSITE" id="PS51218">
    <property type="entry name" value="SF3_HELICASE_2"/>
    <property type="match status" value="1"/>
</dbReference>
<protein>
    <recommendedName>
        <fullName>Genome polyprotein</fullName>
    </recommendedName>
    <component>
        <recommendedName>
            <fullName>P1</fullName>
        </recommendedName>
    </component>
    <component>
        <recommendedName>
            <fullName>Capsid protein VP0</fullName>
        </recommendedName>
        <alternativeName>
            <fullName>VP4-VP2</fullName>
        </alternativeName>
    </component>
    <component>
        <recommendedName>
            <fullName>Capsid protein VP4</fullName>
        </recommendedName>
        <alternativeName>
            <fullName>P1A</fullName>
        </alternativeName>
        <alternativeName>
            <fullName>Virion protein 4</fullName>
        </alternativeName>
    </component>
    <component>
        <recommendedName>
            <fullName>Capsid protein VP2</fullName>
        </recommendedName>
        <alternativeName>
            <fullName>P1B</fullName>
        </alternativeName>
        <alternativeName>
            <fullName>Virion protein 2</fullName>
        </alternativeName>
    </component>
    <component>
        <recommendedName>
            <fullName>Capsid protein VP3</fullName>
        </recommendedName>
        <alternativeName>
            <fullName>P1C</fullName>
        </alternativeName>
        <alternativeName>
            <fullName>Virion protein 3</fullName>
        </alternativeName>
    </component>
    <component>
        <recommendedName>
            <fullName>Capsid protein VP1</fullName>
        </recommendedName>
        <alternativeName>
            <fullName>P1D</fullName>
        </alternativeName>
        <alternativeName>
            <fullName>Virion protein 1</fullName>
        </alternativeName>
    </component>
    <component>
        <recommendedName>
            <fullName>P2</fullName>
        </recommendedName>
    </component>
    <component>
        <recommendedName>
            <fullName>Protease 2A</fullName>
            <shortName>P2A</shortName>
            <ecNumber evidence="2">3.4.22.29</ecNumber>
        </recommendedName>
        <alternativeName>
            <fullName>Picornain 2A</fullName>
        </alternativeName>
        <alternativeName>
            <fullName>Protein 2A</fullName>
        </alternativeName>
    </component>
    <component>
        <recommendedName>
            <fullName>Protein 2B</fullName>
            <shortName>P2B</shortName>
        </recommendedName>
    </component>
    <component>
        <recommendedName>
            <fullName>Protein 2C</fullName>
            <shortName>P2C</shortName>
            <ecNumber evidence="2">3.6.1.15</ecNumber>
        </recommendedName>
    </component>
    <component>
        <recommendedName>
            <fullName>P3</fullName>
        </recommendedName>
    </component>
    <component>
        <recommendedName>
            <fullName>Protein 3AB</fullName>
        </recommendedName>
    </component>
    <component>
        <recommendedName>
            <fullName>Protein 3A</fullName>
            <shortName>P3A</shortName>
        </recommendedName>
    </component>
    <component>
        <recommendedName>
            <fullName>Viral protein genome-linked</fullName>
            <shortName>VPg</shortName>
        </recommendedName>
        <alternativeName>
            <fullName>Protein 3B</fullName>
            <shortName>P3B</shortName>
        </alternativeName>
    </component>
    <component>
        <recommendedName>
            <fullName>Protein 3CD</fullName>
            <ecNumber>3.4.22.28</ecNumber>
        </recommendedName>
    </component>
    <component>
        <recommendedName>
            <fullName evidence="12">Protease 3C</fullName>
            <ecNumber evidence="12">3.4.22.28</ecNumber>
        </recommendedName>
        <alternativeName>
            <fullName evidence="12">Picornain 3C</fullName>
            <shortName evidence="12">P3C</shortName>
        </alternativeName>
    </component>
    <component>
        <recommendedName>
            <fullName evidence="10">RNA-directed RNA polymerase</fullName>
            <shortName>RdRp</shortName>
            <ecNumber evidence="10">2.7.7.48</ecNumber>
        </recommendedName>
        <alternativeName>
            <fullName>3D polymerase</fullName>
            <shortName>3Dpol</shortName>
        </alternativeName>
        <alternativeName>
            <fullName>Protein 3D</fullName>
            <shortName>3D</shortName>
        </alternativeName>
    </component>
</protein>
<feature type="initiator methionine" description="Removed; by host" evidence="2">
    <location>
        <position position="1"/>
    </location>
</feature>
<feature type="chain" id="PRO_0000426107" description="Genome polyprotein">
    <location>
        <begin position="2"/>
        <end position="2175"/>
    </location>
</feature>
<feature type="chain" id="PRO_0000426108" description="P1">
    <location>
        <begin position="2"/>
        <end position="840"/>
    </location>
</feature>
<feature type="chain" id="PRO_0000426109" description="Capsid protein VP0">
    <location>
        <begin position="2"/>
        <end position="317"/>
    </location>
</feature>
<feature type="chain" id="PRO_0000426110" description="Capsid protein VP4">
    <location>
        <begin position="2"/>
        <end position="69"/>
    </location>
</feature>
<feature type="chain" id="PRO_0000426111" description="Capsid protein VP2">
    <location>
        <begin position="70"/>
        <end position="317"/>
    </location>
</feature>
<feature type="chain" id="PRO_0000426112" description="Capsid protein VP3">
    <location>
        <begin position="318"/>
        <end position="559"/>
    </location>
</feature>
<feature type="chain" id="PRO_0000426113" description="Capsid protein VP1">
    <location>
        <begin position="560"/>
        <end position="840"/>
    </location>
</feature>
<feature type="chain" id="PRO_0000426114" description="P2">
    <location>
        <begin position="841"/>
        <end position="1419"/>
    </location>
</feature>
<feature type="chain" id="PRO_0000039463" description="Protease 2A">
    <location>
        <begin position="841"/>
        <end position="990"/>
    </location>
</feature>
<feature type="chain" id="PRO_0000039464" description="Protein 2B">
    <location>
        <begin position="991"/>
        <end position="1089"/>
    </location>
</feature>
<feature type="chain" id="PRO_0000039465" description="Protein 2C">
    <location>
        <begin position="1090"/>
        <end position="1419"/>
    </location>
</feature>
<feature type="chain" id="PRO_0000426115" description="P3">
    <location>
        <begin position="1420"/>
        <end position="2175"/>
    </location>
</feature>
<feature type="chain" id="PRO_0000426116" description="Protein 3AB">
    <location>
        <begin position="1420"/>
        <end position="1531"/>
    </location>
</feature>
<feature type="chain" id="PRO_0000039466" description="Protein 3A">
    <location>
        <begin position="1420"/>
        <end position="1508"/>
    </location>
</feature>
<feature type="chain" id="PRO_0000426117" description="Viral protein genome-linked">
    <location>
        <begin position="1509"/>
        <end position="1531"/>
    </location>
</feature>
<feature type="chain" id="PRO_0000426118" description="Protein 3CD">
    <location>
        <begin position="1532"/>
        <end position="2175"/>
    </location>
</feature>
<feature type="chain" id="PRO_0000426119" description="Protease 3C">
    <location>
        <begin position="1532"/>
        <end position="1714"/>
    </location>
</feature>
<feature type="chain" id="PRO_0000426120" description="RNA-directed RNA polymerase">
    <location>
        <begin position="1715"/>
        <end position="2175"/>
    </location>
</feature>
<feature type="topological domain" description="Cytoplasmic" evidence="9">
    <location>
        <begin position="2"/>
        <end position="1485"/>
    </location>
</feature>
<feature type="intramembrane region" evidence="9">
    <location>
        <begin position="1486"/>
        <end position="1501"/>
    </location>
</feature>
<feature type="topological domain" description="Cytoplasmic" evidence="9">
    <location>
        <begin position="1502"/>
        <end position="2175"/>
    </location>
</feature>
<feature type="domain" description="SF3 helicase" evidence="11">
    <location>
        <begin position="1194"/>
        <end position="1352"/>
    </location>
</feature>
<feature type="domain" description="Peptidase C3" evidence="12">
    <location>
        <begin position="1532"/>
        <end position="1710"/>
    </location>
</feature>
<feature type="domain" description="RdRp catalytic" evidence="10">
    <location>
        <begin position="1941"/>
        <end position="2056"/>
    </location>
</feature>
<feature type="zinc finger region" description="C4-type; degenerate" evidence="1">
    <location>
        <begin position="1359"/>
        <end position="1375"/>
    </location>
</feature>
<feature type="region of interest" description="Amphipathic alpha-helix" evidence="9">
    <location>
        <begin position="557"/>
        <end position="574"/>
    </location>
</feature>
<feature type="region of interest" description="Amphipathic alpha-helix" evidence="9">
    <location>
        <begin position="560"/>
        <end position="581"/>
    </location>
</feature>
<feature type="region of interest" description="Oligomerization" evidence="2">
    <location>
        <begin position="1090"/>
        <end position="1228"/>
    </location>
</feature>
<feature type="region of interest" description="Membrane-binding" evidence="2">
    <location>
        <begin position="1090"/>
        <end position="1162"/>
    </location>
</feature>
<feature type="region of interest" description="RNA-binding" evidence="2">
    <location>
        <begin position="1111"/>
        <end position="1115"/>
    </location>
</feature>
<feature type="region of interest" description="RNA-binding" evidence="2">
    <location>
        <begin position="1403"/>
        <end position="1410"/>
    </location>
</feature>
<feature type="region of interest" description="Oligomerization" evidence="2">
    <location>
        <begin position="1414"/>
        <end position="1419"/>
    </location>
</feature>
<feature type="active site" description="For protease 2A activity" evidence="2">
    <location>
        <position position="861"/>
    </location>
</feature>
<feature type="active site" description="For protease 2A activity" evidence="2">
    <location>
        <position position="879"/>
    </location>
</feature>
<feature type="active site" description="For protease 2A activity" evidence="2">
    <location>
        <position position="950"/>
    </location>
</feature>
<feature type="active site" description="For protease 3C activity" evidence="12">
    <location>
        <position position="1571"/>
    </location>
</feature>
<feature type="active site" description="For protease 3C activity" evidence="12">
    <location>
        <position position="1602"/>
    </location>
</feature>
<feature type="active site" description="For protease 3C activity" evidence="12">
    <location>
        <position position="1678"/>
    </location>
</feature>
<feature type="binding site" evidence="8">
    <location>
        <position position="896"/>
    </location>
    <ligand>
        <name>Zn(2+)</name>
        <dbReference type="ChEBI" id="CHEBI:29105"/>
        <label>1</label>
        <note>structural</note>
    </ligand>
</feature>
<feature type="binding site" evidence="8">
    <location>
        <position position="898"/>
    </location>
    <ligand>
        <name>Zn(2+)</name>
        <dbReference type="ChEBI" id="CHEBI:29105"/>
        <label>1</label>
        <note>structural</note>
    </ligand>
</feature>
<feature type="binding site" evidence="8">
    <location>
        <position position="956"/>
    </location>
    <ligand>
        <name>Zn(2+)</name>
        <dbReference type="ChEBI" id="CHEBI:29105"/>
        <label>1</label>
        <note>structural</note>
    </ligand>
</feature>
<feature type="binding site" evidence="8">
    <location>
        <position position="958"/>
    </location>
    <ligand>
        <name>Zn(2+)</name>
        <dbReference type="ChEBI" id="CHEBI:29105"/>
        <label>1</label>
        <note>structural</note>
    </ligand>
</feature>
<feature type="binding site" evidence="1">
    <location>
        <position position="1359"/>
    </location>
    <ligand>
        <name>Zn(2+)</name>
        <dbReference type="ChEBI" id="CHEBI:29105"/>
        <label>2</label>
    </ligand>
</feature>
<feature type="binding site" evidence="1">
    <location>
        <position position="1370"/>
    </location>
    <ligand>
        <name>Zn(2+)</name>
        <dbReference type="ChEBI" id="CHEBI:29105"/>
        <label>2</label>
    </ligand>
</feature>
<feature type="binding site" evidence="1">
    <location>
        <position position="1375"/>
    </location>
    <ligand>
        <name>Zn(2+)</name>
        <dbReference type="ChEBI" id="CHEBI:29105"/>
        <label>2</label>
    </ligand>
</feature>
<feature type="binding site" evidence="2">
    <location>
        <position position="1947"/>
    </location>
    <ligand>
        <name>Mg(2+)</name>
        <dbReference type="ChEBI" id="CHEBI:18420"/>
        <label>1</label>
        <note>catalytic; for RdRp activity</note>
    </ligand>
</feature>
<feature type="binding site" evidence="2">
    <location>
        <position position="1947"/>
    </location>
    <ligand>
        <name>Mg(2+)</name>
        <dbReference type="ChEBI" id="CHEBI:18420"/>
        <label>2</label>
        <note>catalytic; for RdRp activity</note>
    </ligand>
</feature>
<feature type="binding site" evidence="2">
    <location>
        <position position="2042"/>
    </location>
    <ligand>
        <name>Mg(2+)</name>
        <dbReference type="ChEBI" id="CHEBI:18420"/>
        <label>1</label>
        <note>catalytic; for RdRp activity</note>
    </ligand>
</feature>
<feature type="binding site" evidence="2">
    <location>
        <position position="2042"/>
    </location>
    <ligand>
        <name>Mg(2+)</name>
        <dbReference type="ChEBI" id="CHEBI:18420"/>
        <label>2</label>
        <note>catalytic; for RdRp activity</note>
    </ligand>
</feature>
<feature type="site" description="Cleavage; by autolysis" evidence="2">
    <location>
        <begin position="69"/>
        <end position="70"/>
    </location>
</feature>
<feature type="site" description="Cleavage; by protease 3C" evidence="3">
    <location>
        <begin position="317"/>
        <end position="318"/>
    </location>
</feature>
<feature type="site" description="Cleavage; by autolysis" evidence="3">
    <location>
        <begin position="840"/>
        <end position="841"/>
    </location>
</feature>
<feature type="site" description="Cleavage; by protease 3C" evidence="3">
    <location>
        <begin position="990"/>
        <end position="991"/>
    </location>
</feature>
<feature type="site" description="Cleavage; by protease 3C" evidence="3">
    <location>
        <begin position="1089"/>
        <end position="1090"/>
    </location>
</feature>
<feature type="site" description="Involved in the interaction with host RTN3" evidence="7">
    <location>
        <position position="1114"/>
    </location>
</feature>
<feature type="site" description="Cleavage; by protease 3C" evidence="3">
    <location>
        <begin position="1419"/>
        <end position="1420"/>
    </location>
</feature>
<feature type="site" description="Cleavage; by protease 3C" evidence="3">
    <location>
        <begin position="1508"/>
        <end position="1509"/>
    </location>
</feature>
<feature type="site" description="Cleavage; by protease 3C" evidence="3">
    <location>
        <begin position="1531"/>
        <end position="1532"/>
    </location>
</feature>
<feature type="site" description="Cleavage; by protease 3C" evidence="3">
    <location>
        <begin position="1714"/>
        <end position="1715"/>
    </location>
</feature>
<feature type="modified residue" description="O-(5'-phospho-RNA)-tyrosine" evidence="2">
    <location>
        <position position="1511"/>
    </location>
</feature>
<feature type="lipid moiety-binding region" description="N-myristoyl glycine; by host" evidence="2">
    <location>
        <position position="2"/>
    </location>
</feature>
<feature type="strand" evidence="14">
    <location>
        <begin position="33"/>
        <end position="35"/>
    </location>
</feature>
<feature type="helix" evidence="14">
    <location>
        <begin position="36"/>
        <end position="38"/>
    </location>
</feature>
<feature type="helix" evidence="14">
    <location>
        <begin position="51"/>
        <end position="54"/>
    </location>
</feature>
<feature type="strand" evidence="14">
    <location>
        <begin position="57"/>
        <end position="59"/>
    </location>
</feature>
<feature type="strand" evidence="14">
    <location>
        <begin position="78"/>
        <end position="81"/>
    </location>
</feature>
<feature type="strand" evidence="14">
    <location>
        <begin position="83"/>
        <end position="87"/>
    </location>
</feature>
<feature type="strand" evidence="14">
    <location>
        <begin position="90"/>
        <end position="96"/>
    </location>
</feature>
<feature type="helix" evidence="14">
    <location>
        <begin position="103"/>
        <end position="105"/>
    </location>
</feature>
<feature type="turn" evidence="14">
    <location>
        <begin position="113"/>
        <end position="115"/>
    </location>
</feature>
<feature type="helix" evidence="14">
    <location>
        <begin position="126"/>
        <end position="128"/>
    </location>
</feature>
<feature type="strand" evidence="14">
    <location>
        <begin position="147"/>
        <end position="151"/>
    </location>
</feature>
<feature type="helix" evidence="14">
    <location>
        <begin position="153"/>
        <end position="155"/>
    </location>
</feature>
<feature type="helix" evidence="14">
    <location>
        <begin position="159"/>
        <end position="167"/>
    </location>
</feature>
<feature type="strand" evidence="14">
    <location>
        <begin position="168"/>
        <end position="180"/>
    </location>
</feature>
<feature type="strand" evidence="14">
    <location>
        <begin position="187"/>
        <end position="197"/>
    </location>
</feature>
<feature type="strand" evidence="14">
    <location>
        <begin position="203"/>
        <end position="205"/>
    </location>
</feature>
<feature type="helix" evidence="14">
    <location>
        <begin position="209"/>
        <end position="212"/>
    </location>
</feature>
<feature type="helix" evidence="14">
    <location>
        <begin position="215"/>
        <end position="217"/>
    </location>
</feature>
<feature type="helix" evidence="14">
    <location>
        <begin position="224"/>
        <end position="226"/>
    </location>
</feature>
<feature type="turn" evidence="14">
    <location>
        <begin position="227"/>
        <end position="230"/>
    </location>
</feature>
<feature type="helix" evidence="14">
    <location>
        <begin position="234"/>
        <end position="238"/>
    </location>
</feature>
<feature type="strand" evidence="14">
    <location>
        <begin position="239"/>
        <end position="245"/>
    </location>
</feature>
<feature type="turn" evidence="14">
    <location>
        <begin position="246"/>
        <end position="248"/>
    </location>
</feature>
<feature type="strand" evidence="14">
    <location>
        <begin position="250"/>
        <end position="256"/>
    </location>
</feature>
<feature type="strand" evidence="14">
    <location>
        <begin position="261"/>
        <end position="263"/>
    </location>
</feature>
<feature type="turn" evidence="14">
    <location>
        <begin position="267"/>
        <end position="269"/>
    </location>
</feature>
<feature type="strand" evidence="14">
    <location>
        <begin position="273"/>
        <end position="289"/>
    </location>
</feature>
<feature type="strand" evidence="14">
    <location>
        <begin position="294"/>
        <end position="309"/>
    </location>
</feature>
<feature type="turn" evidence="14">
    <location>
        <begin position="325"/>
        <end position="328"/>
    </location>
</feature>
<feature type="strand" evidence="14">
    <location>
        <begin position="340"/>
        <end position="342"/>
    </location>
</feature>
<feature type="strand" evidence="14">
    <location>
        <begin position="356"/>
        <end position="359"/>
    </location>
</feature>
<feature type="helix" evidence="14">
    <location>
        <begin position="361"/>
        <end position="364"/>
    </location>
</feature>
<feature type="helix" evidence="14">
    <location>
        <begin position="382"/>
        <end position="384"/>
    </location>
</feature>
<feature type="strand" evidence="14">
    <location>
        <begin position="386"/>
        <end position="389"/>
    </location>
</feature>
<feature type="strand" evidence="14">
    <location>
        <begin position="397"/>
        <end position="402"/>
    </location>
</feature>
<feature type="helix" evidence="14">
    <location>
        <begin position="410"/>
        <end position="413"/>
    </location>
</feature>
<feature type="helix" evidence="14">
    <location>
        <begin position="415"/>
        <end position="420"/>
    </location>
</feature>
<feature type="strand" evidence="14">
    <location>
        <begin position="423"/>
        <end position="428"/>
    </location>
</feature>
<feature type="strand" evidence="14">
    <location>
        <begin position="430"/>
        <end position="436"/>
    </location>
</feature>
<feature type="strand" evidence="14">
    <location>
        <begin position="445"/>
        <end position="451"/>
    </location>
</feature>
<feature type="strand" evidence="14">
    <location>
        <begin position="453"/>
        <end position="455"/>
    </location>
</feature>
<feature type="helix" evidence="14">
    <location>
        <begin position="461"/>
        <end position="464"/>
    </location>
</feature>
<feature type="strand" evidence="14">
    <location>
        <begin position="467"/>
        <end position="473"/>
    </location>
</feature>
<feature type="strand" evidence="14">
    <location>
        <begin position="475"/>
        <end position="477"/>
    </location>
</feature>
<feature type="strand" evidence="14">
    <location>
        <begin position="479"/>
        <end position="484"/>
    </location>
</feature>
<feature type="strand" evidence="14">
    <location>
        <begin position="489"/>
        <end position="491"/>
    </location>
</feature>
<feature type="strand" evidence="14">
    <location>
        <begin position="493"/>
        <end position="495"/>
    </location>
</feature>
<feature type="turn" evidence="14">
    <location>
        <begin position="499"/>
        <end position="502"/>
    </location>
</feature>
<feature type="helix" evidence="14">
    <location>
        <begin position="503"/>
        <end position="506"/>
    </location>
</feature>
<feature type="strand" evidence="14">
    <location>
        <begin position="510"/>
        <end position="517"/>
    </location>
</feature>
<feature type="strand" evidence="14">
    <location>
        <begin position="527"/>
        <end position="537"/>
    </location>
</feature>
<feature type="strand" evidence="14">
    <location>
        <begin position="542"/>
        <end position="546"/>
    </location>
</feature>
<feature type="helix" evidence="14">
    <location>
        <begin position="600"/>
        <end position="602"/>
    </location>
</feature>
<feature type="helix" evidence="14">
    <location>
        <begin position="610"/>
        <end position="613"/>
    </location>
</feature>
<feature type="helix" evidence="14">
    <location>
        <begin position="626"/>
        <end position="628"/>
    </location>
</feature>
<feature type="helix" evidence="14">
    <location>
        <begin position="630"/>
        <end position="634"/>
    </location>
</feature>
<feature type="strand" evidence="14">
    <location>
        <begin position="638"/>
        <end position="641"/>
    </location>
</feature>
<feature type="turn" evidence="14">
    <location>
        <begin position="647"/>
        <end position="649"/>
    </location>
</feature>
<feature type="strand" evidence="14">
    <location>
        <begin position="651"/>
        <end position="655"/>
    </location>
</feature>
<feature type="helix" evidence="14">
    <location>
        <begin position="662"/>
        <end position="668"/>
    </location>
</feature>
<feature type="strand" evidence="14">
    <location>
        <begin position="671"/>
        <end position="685"/>
    </location>
</feature>
<feature type="strand" evidence="14">
    <location>
        <begin position="699"/>
        <end position="705"/>
    </location>
</feature>
<feature type="strand" evidence="14">
    <location>
        <begin position="714"/>
        <end position="716"/>
    </location>
</feature>
<feature type="helix" evidence="14">
    <location>
        <begin position="718"/>
        <end position="721"/>
    </location>
</feature>
<feature type="strand" evidence="14">
    <location>
        <begin position="723"/>
        <end position="725"/>
    </location>
</feature>
<feature type="strand" evidence="14">
    <location>
        <begin position="727"/>
        <end position="731"/>
    </location>
</feature>
<feature type="strand" evidence="14">
    <location>
        <begin position="737"/>
        <end position="741"/>
    </location>
</feature>
<feature type="strand" evidence="14">
    <location>
        <begin position="746"/>
        <end position="752"/>
    </location>
</feature>
<feature type="strand" evidence="14">
    <location>
        <begin position="756"/>
        <end position="759"/>
    </location>
</feature>
<feature type="helix" evidence="14">
    <location>
        <begin position="765"/>
        <end position="767"/>
    </location>
</feature>
<feature type="helix" evidence="14">
    <location>
        <begin position="772"/>
        <end position="774"/>
    </location>
</feature>
<feature type="strand" evidence="14">
    <location>
        <begin position="778"/>
        <end position="785"/>
    </location>
</feature>
<feature type="strand" evidence="14">
    <location>
        <begin position="792"/>
        <end position="807"/>
    </location>
</feature>
<feature type="strand" evidence="14">
    <location>
        <begin position="818"/>
        <end position="820"/>
    </location>
</feature>
<proteinExistence type="evidence at protein level"/>
<comment type="function">
    <molecule>Capsid protein VP1</molecule>
    <text evidence="2">Forms an icosahedral capsid of pseudo T=3 symmetry with capsid proteins VP2 and VP3 (By similarity). The capsid is 300 Angstroms in diameter, composed of 60 copies of each capsid protein and enclosing the viral positive strand RNA genome (By similarity). Capsid protein VP1 mainly forms the vertices of the capsid (By similarity). Capsid protein VP1 interacts with host cell receptor to provide virion attachment to target host cells (By similarity). This attachment induces virion internalization (By similarity). Tyrosine kinases are probably involved in the entry process (By similarity). After binding to its receptor, the capsid undergoes conformational changes (By similarity). Capsid protein VP1 N-terminus (that contains an amphipathic alpha-helix) and capsid protein VP4 are externalized (By similarity). Together, they shape a pore in the host membrane through which viral genome is translocated to host cell cytoplasm (By similarity).</text>
</comment>
<comment type="function">
    <molecule>Capsid protein VP2</molecule>
    <text evidence="2">Forms an icosahedral capsid of pseudo T=3 symmetry with capsid proteins VP2 and VP3 (By similarity). The capsid is 300 Angstroms in diameter, composed of 60 copies of each capsid protein and enclosing the viral positive strand RNA genome (By similarity).</text>
</comment>
<comment type="function">
    <molecule>Capsid protein VP3</molecule>
    <text evidence="2">Forms an icosahedral capsid of pseudo T=3 symmetry with capsid proteins VP2 and VP3 (By similarity). The capsid is 300 Angstroms in diameter, composed of 60 copies of each capsid protein and enclosing the viral positive strand RNA genome (By similarity).</text>
</comment>
<comment type="function">
    <molecule>Capsid protein VP4</molecule>
    <text evidence="2">Lies on the inner surface of the capsid shell (By similarity). After binding to the host receptor, the capsid undergoes conformational changes (By similarity). Capsid protein VP4 is released, Capsid protein VP1 N-terminus is externalized, and together, they shape a pore in the host membrane through which the viral genome is translocated into the host cell cytoplasm (By similarity).</text>
</comment>
<comment type="function">
    <molecule>Capsid protein VP0</molecule>
    <text evidence="2">Component of immature procapsids, which is cleaved into capsid proteins VP4 and VP2 after maturation (By similarity). Allows the capsid to remain inactive before the maturation step (By similarity).</text>
</comment>
<comment type="function">
    <molecule>Protease 2A</molecule>
    <text evidence="2 3">Cysteine protease that cleaves viral polyprotein and specific host proteins (By similarity). It is responsible for the autocatalytic cleavage between the P1 and P2 regions, which is the first cleavage occurring in the polyprotein (By similarity). Also cleaves the host translation initiation factor EIF4G1, in order to shut down the capped cellular mRNA translation (By similarity). Inhibits the host nucleus-cytoplasm protein and RNA trafficking by cleaving host members of the nuclear pores (By similarity). Counteracts stress granule formation probably by antagonizing its assembly or promoting its dissassembly (By similarity).</text>
</comment>
<comment type="function">
    <molecule>Protein 2B</molecule>
    <text evidence="2">Plays an essential role in the virus replication cycle by acting as a viroporin. Creates a pore in the host endoplasmic reticulum and as a consequence releases Ca2+ in the cytoplasm of infected cell. In turn, high levels of cytoplasmic calcium may trigger membrane trafficking and transport of viral ER-associated proteins to viroplasms, sites of viral genome replication.</text>
</comment>
<comment type="function">
    <molecule>Protein 2C</molecule>
    <text evidence="2">Induces and associates with structural rearrangements of intracellular membranes. Displays RNA-binding, nucleotide binding and NTPase activities. May play a role in virion morphogenesis and viral RNA encapsidation by interacting with the capsid protein VP3.</text>
</comment>
<comment type="function">
    <molecule>Protein 3AB</molecule>
    <text evidence="2">Localizes the viral replication complex to the surface of membranous vesicles. Together with protein 3CD binds the Cis-Active RNA Element (CRE) which is involved in RNA synthesis initiation. Acts as a cofactor to stimulate the activity of 3D polymerase, maybe through a nucleid acid chaperone activity.</text>
</comment>
<comment type="function">
    <molecule>Protein 3A</molecule>
    <text evidence="2">Localizes the viral replication complex to the surface of membranous vesicles (By similarity). It inhibits host cell endoplasmic reticulum-to-Golgi apparatus transport and causes the disassembly of the Golgi complex, possibly through GBF1 interaction (By similarity). This would result in depletion of MHC, trail receptors and IFN receptors at the host cell surface (By similarity). Plays an essential role in viral RNA replication by recruiting ACBD3 and PI4KB at the viral replication sites, thereby allowing the formation of the rearranged membranous structures where viral replication takes place (By similarity).</text>
</comment>
<comment type="function">
    <molecule>Viral protein genome-linked</molecule>
    <text evidence="2">Acts as a primer for viral RNA replication and remains covalently bound to viral genomic RNA. VPg is uridylylated prior to priming replication into VPg-pUpU. The oriI viral genomic sequence may act as a template for this. The VPg-pUpU is then used as primer on the genomic RNA poly(A) by the RNA-dependent RNA polymerase to replicate the viral genome. During genome replication, the VPg-RNA linkage is removed by the host TDP2, thereby accelerating replication. During the late stage of the replication cycle, host TDP2 is excluded from sites of viral RNA synthesis and encapsidation, allowing for the generation of progeny virions.</text>
</comment>
<comment type="function">
    <molecule>Protein 3CD</molecule>
    <text evidence="2">Involved in the viral replication complex and viral polypeptide maturation. It exhibits protease activity with a specificity and catalytic efficiency that is different from protease 3C. Protein 3CD lacks polymerase activity. Protein 3CD binds to the 5'UTR of the viral genome.</text>
</comment>
<comment type="function">
    <molecule>RNA-directed RNA polymerase</molecule>
    <text evidence="2">Replicates the viral genomic RNA on the surface of intracellular membranes. May form linear arrays of subunits that propagate along a strong head-to-tail interaction called interface-I. Covalently attaches UMP to a tyrosine of VPg, which is used to prime RNA synthesis. The positive stranded RNA genome is first replicated at virus induced membranous vesicles, creating a dsRNA genomic replication form. This dsRNA is then used as template to synthesize positive stranded RNA genomes. ss(+)RNA genomes are either translated, replicated or encapsidated.</text>
</comment>
<comment type="function">
    <molecule>Protease 3C</molecule>
    <text evidence="2 4">Major viral protease that mediates proteolytic processing of the polyprotein (By similarity). Cleaves host EIF5B, contributing to host translation shutoff (By similarity). Also cleaves host PABPC1, contributing to host translation shutoff (By similarity). Cleaves host NLRP1, triggers host N-glycine-mediated degradation of the autoinhibitory NLRP1 N-terminal fragment (By similarity).</text>
</comment>
<comment type="catalytic activity">
    <molecule>Protein 2C</molecule>
    <reaction evidence="2">
        <text>a ribonucleoside 5'-triphosphate + H2O = a ribonucleoside 5'-diphosphate + phosphate + H(+)</text>
        <dbReference type="Rhea" id="RHEA:23680"/>
        <dbReference type="ChEBI" id="CHEBI:15377"/>
        <dbReference type="ChEBI" id="CHEBI:15378"/>
        <dbReference type="ChEBI" id="CHEBI:43474"/>
        <dbReference type="ChEBI" id="CHEBI:57930"/>
        <dbReference type="ChEBI" id="CHEBI:61557"/>
        <dbReference type="EC" id="3.6.1.15"/>
    </reaction>
</comment>
<comment type="catalytic activity">
    <molecule>Protease 2A</molecule>
    <reaction evidence="2">
        <text>Selective cleavage of Tyr-|-Gly bond in the picornavirus polyprotein.</text>
        <dbReference type="EC" id="3.4.22.29"/>
    </reaction>
</comment>
<comment type="catalytic activity">
    <molecule>RNA-directed RNA polymerase</molecule>
    <reaction evidence="10">
        <text>RNA(n) + a ribonucleoside 5'-triphosphate = RNA(n+1) + diphosphate</text>
        <dbReference type="Rhea" id="RHEA:21248"/>
        <dbReference type="Rhea" id="RHEA-COMP:14527"/>
        <dbReference type="Rhea" id="RHEA-COMP:17342"/>
        <dbReference type="ChEBI" id="CHEBI:33019"/>
        <dbReference type="ChEBI" id="CHEBI:61557"/>
        <dbReference type="ChEBI" id="CHEBI:140395"/>
        <dbReference type="EC" id="2.7.7.48"/>
    </reaction>
</comment>
<comment type="catalytic activity">
    <molecule>Protease 3C</molecule>
    <reaction evidence="12">
        <text>Selective cleavage of Gln-|-Gly bond in the poliovirus polyprotein. In other picornavirus reactions Glu may be substituted for Gln, and Ser or Thr for Gly.</text>
        <dbReference type="EC" id="3.4.22.28"/>
    </reaction>
</comment>
<comment type="cofactor">
    <molecule>RNA-directed RNA polymerase</molecule>
    <cofactor evidence="2">
        <name>Mg(2+)</name>
        <dbReference type="ChEBI" id="CHEBI:18420"/>
    </cofactor>
    <text evidence="2 5">Binds 2 magnesium ions that constitute a dinuclear catalytic metal center (By similarity). The magnesium ions are not prebound but only present for catalysis (By similarity). Requires the presence of 3CDpro or 3CPro (By similarity).</text>
</comment>
<comment type="activity regulation">
    <molecule>RNA-directed RNA polymerase</molecule>
    <text evidence="2">Replication or transcription is subject to high level of random mutations by the nucleotide analog ribavirin.</text>
</comment>
<comment type="subunit">
    <molecule>Capsid protein VP0</molecule>
    <text evidence="2">Interacts with capsid protein VP1 and capsid protein VP3 to form heterotrimeric protomers.</text>
</comment>
<comment type="subunit">
    <molecule>Capsid protein VP1</molecule>
    <text evidence="2">Interacts with capsid protein VP0, and capsid protein VP3 to form heterotrimeric protomers (By similarity). Five protomers subsequently associate to form pentamers which serve as building blocks for the capsid (By similarity). Interacts with capsid protein VP2, capsid protein VP3 and capsid protein VP4 following cleavage of capsid protein VP0 (By similarity).</text>
</comment>
<comment type="subunit">
    <molecule>Capsid protein VP2</molecule>
    <text evidence="2">Interacts with capsid protein VP1 and capsid protein VP3 in the mature capsid.</text>
</comment>
<comment type="subunit">
    <molecule>Capsid protein VP3</molecule>
    <text evidence="2">Interacts with capsid protein VP0 and capsid protein VP1 to form heterotrimeric protomers (By similarity). Five protomers subsequently associate to form pentamers which serve as building blocks for the capsid (By similarity). Interacts with capsid protein VP4 in the mature capsid (By similarity). Interacts with protein 2C; this interaction may be important for virion morphogenesis (By similarity).</text>
</comment>
<comment type="subunit">
    <molecule>Capsid protein VP4</molecule>
    <text evidence="2">Interacts with capsid protein VP1 and capsid protein VP3.</text>
</comment>
<comment type="subunit">
    <molecule>Protease 2A</molecule>
    <text evidence="6">Homodimer.</text>
</comment>
<comment type="subunit">
    <molecule>Protein 2C</molecule>
    <text evidence="2">Homohexamer; forms a hexameric ring structure with 6-fold symmetry characteristic of AAA+ ATPases (By similarity). Interacts (via N-terminus) with host RTN3 (via reticulon domain); this interaction is important for viral replication (By similarity). Interacts with capsid protein VP3; this interaction may be important for virion morphogenesis (By similarity).</text>
</comment>
<comment type="subunit">
    <molecule>Protein 3AB</molecule>
    <text evidence="2">Interacts with protein 3CD.</text>
</comment>
<comment type="subunit">
    <molecule>Protein 3A</molecule>
    <text evidence="2">Homodimer (By similarity). Interacts with host GBF1 (By similarity). Interacts (via GOLD domain) with host ACBD3 (via GOLD domain); this interaction allows the formation of a viral protein 3A/ACBD3 heterotetramer with a 2:2 stoichiometry, which will stimulate the recruitment of host PI4KB in order to synthesize PI4P at the viral RNA replication sites (By similarity).</text>
</comment>
<comment type="subunit">
    <molecule>Viral protein genome-linked</molecule>
    <text evidence="2">Interacts with RNA-directed RNA polymerase.</text>
</comment>
<comment type="subunit">
    <molecule>Protein 3CD</molecule>
    <text evidence="2">Interacts with protein 3AB and with RNA-directed RNA polymerase.</text>
</comment>
<comment type="subunit">
    <molecule>RNA-directed RNA polymerase</molecule>
    <text evidence="2">Interacts with Viral protein genome-linked and with protein 3CD.</text>
</comment>
<comment type="subcellular location">
    <molecule>Capsid protein VP0</molecule>
    <subcellularLocation>
        <location>Virion</location>
    </subcellularLocation>
    <subcellularLocation>
        <location evidence="13">Host cytoplasm</location>
    </subcellularLocation>
</comment>
<comment type="subcellular location">
    <molecule>Capsid protein VP4</molecule>
    <subcellularLocation>
        <location>Virion</location>
    </subcellularLocation>
</comment>
<comment type="subcellular location">
    <molecule>Capsid protein VP2</molecule>
    <subcellularLocation>
        <location evidence="2">Virion</location>
    </subcellularLocation>
    <subcellularLocation>
        <location evidence="13">Host cytoplasm</location>
    </subcellularLocation>
</comment>
<comment type="subcellular location">
    <molecule>Capsid protein VP3</molecule>
    <subcellularLocation>
        <location evidence="2">Virion</location>
    </subcellularLocation>
    <subcellularLocation>
        <location evidence="13">Host cytoplasm</location>
    </subcellularLocation>
</comment>
<comment type="subcellular location">
    <molecule>Capsid protein VP1</molecule>
    <subcellularLocation>
        <location evidence="2">Virion</location>
    </subcellularLocation>
    <subcellularLocation>
        <location evidence="13">Host cytoplasm</location>
    </subcellularLocation>
</comment>
<comment type="subcellular location">
    <molecule>Protein 2B</molecule>
    <subcellularLocation>
        <location evidence="13">Host cytoplasmic vesicle membrane</location>
        <topology evidence="13">Peripheral membrane protein</topology>
        <orientation evidence="13">Cytoplasmic side</orientation>
    </subcellularLocation>
    <text>Probably localizes to the surface of intracellular membrane vesicles that are induced after virus infection as the site for viral RNA replication. These vesicles are derived from the endoplasmic reticulum.</text>
</comment>
<comment type="subcellular location">
    <molecule>Protein 2C</molecule>
    <subcellularLocation>
        <location evidence="13">Host cytoplasmic vesicle membrane</location>
        <topology evidence="13">Peripheral membrane protein</topology>
        <orientation evidence="13">Cytoplasmic side</orientation>
    </subcellularLocation>
    <text>Probably localizes to the surface of intracellular membrane vesicles that are induced after virus infection as the site for viral RNA replication. These vesicles are derived from the endoplasmic reticulum.</text>
</comment>
<comment type="subcellular location">
    <molecule>Protein 3A</molecule>
    <subcellularLocation>
        <location evidence="13">Host cytoplasmic vesicle membrane</location>
        <topology evidence="13">Peripheral membrane protein</topology>
        <orientation evidence="13">Cytoplasmic side</orientation>
    </subcellularLocation>
    <text>Probably localizes to the surface of intracellular membrane vesicles that are induced after virus infection as the site for viral RNA replication. These vesicles are derived from the endoplasmic reticulum.</text>
</comment>
<comment type="subcellular location">
    <molecule>Protein 3AB</molecule>
    <subcellularLocation>
        <location evidence="13">Host cytoplasmic vesicle membrane</location>
        <topology evidence="13">Peripheral membrane protein</topology>
        <orientation evidence="13">Cytoplasmic side</orientation>
    </subcellularLocation>
    <text>Probably localizes to the surface of intracellular membrane vesicles that are induced after virus infection as the site for viral RNA replication. These vesicles are derived from the endoplasmic reticulum.</text>
</comment>
<comment type="subcellular location">
    <molecule>Viral protein genome-linked</molecule>
    <subcellularLocation>
        <location evidence="2">Virion</location>
    </subcellularLocation>
    <subcellularLocation>
        <location evidence="7">Host cytoplasm</location>
    </subcellularLocation>
</comment>
<comment type="subcellular location">
    <molecule>Protease 3C</molecule>
    <subcellularLocation>
        <location>Host cytoplasm</location>
    </subcellularLocation>
</comment>
<comment type="subcellular location">
    <molecule>Protein 3CD</molecule>
    <subcellularLocation>
        <location evidence="2">Host nucleus</location>
    </subcellularLocation>
    <subcellularLocation>
        <location evidence="2">Host cytoplasm</location>
    </subcellularLocation>
    <subcellularLocation>
        <location evidence="13">Host cytoplasmic vesicle membrane</location>
        <topology evidence="13">Peripheral membrane protein</topology>
        <orientation evidence="13">Cytoplasmic side</orientation>
    </subcellularLocation>
    <text>Probably localizes to the surface of intracellular membrane vesicles that are induced after virus infection as the site for viral RNA replication. These vesicles are derived from the endoplasmic reticulum.</text>
</comment>
<comment type="subcellular location">
    <molecule>RNA-directed RNA polymerase</molecule>
    <subcellularLocation>
        <location evidence="13">Host cytoplasmic vesicle membrane</location>
        <topology evidence="13">Peripheral membrane protein</topology>
        <orientation evidence="13">Cytoplasmic side</orientation>
    </subcellularLocation>
    <text>Probably localizes to the surface of intracellular membrane vesicles that are induced after virus infection as the site for viral RNA replication. These vesicles are derived from the endoplasmic reticulum.</text>
</comment>
<comment type="domain">
    <molecule>Protein 2C</molecule>
    <text evidence="1 2">The N-terminus has membrane-binding (By similarity). The N-terminus also displays RNA-binding properties (By similarity). The N-terminus is involved in oligomerization (By similarity). The central part contains an ATPase domain and a degenerate C4-type zinc-finger with only 3 cysteines (By similarity). The C-terminus is involved in RNA-binding (By similarity). The extreme C-terminus contains a region involved in oligomerization (By similarity).</text>
</comment>
<comment type="PTM">
    <molecule>Genome polyprotein</molecule>
    <text evidence="2">Specific enzymatic cleavages in vivo by the viral proteases yield processing intermediates and the mature proteins.</text>
</comment>
<comment type="PTM">
    <molecule>Capsid protein VP0</molecule>
    <text evidence="2">Myristoylation is required for the formation of pentamers during virus assembly. Further assembly of 12 pentamers and a molecule of genomic RNA generates the provirion.</text>
</comment>
<comment type="PTM">
    <molecule>Capsid protein VP0</molecule>
    <text evidence="2">During virion maturation, immature virions are rendered infectious following cleavage of VP0 into VP4 and VP2. This maturation seems to be an autocatalytic event triggered by the presence of RNA in the capsid and it is followed by a conformational change infectious virion.</text>
</comment>
<comment type="PTM">
    <molecule>Capsid protein VP4</molecule>
    <text evidence="2">Myristoylation is required during RNA encapsidation and formation of the mature virus particle.</text>
</comment>
<comment type="PTM">
    <molecule>Viral protein genome-linked</molecule>
    <text evidence="2">VPg is uridylylated by the polymerase into VPg-pUpU. This acts as a nucleotide-peptide primer for the genomic RNA replication.</text>
</comment>
<comment type="similarity">
    <text evidence="13">Belongs to the picornaviruses polyprotein family.</text>
</comment>
<comment type="online information" name="Virus Particle ExploreR db">
    <link uri="https://viperdb.org/Info_Page.php?VDB=1bev"/>
    <text>Icosahedral capsid structure</text>
</comment>
<organismHost>
    <name type="scientific">Bos taurus</name>
    <name type="common">Bovine</name>
    <dbReference type="NCBI Taxonomy" id="9913"/>
</organismHost>
<evidence type="ECO:0000250" key="1">
    <source>
        <dbReference type="UniProtKB" id="B9VUU3"/>
    </source>
</evidence>
<evidence type="ECO:0000250" key="2">
    <source>
        <dbReference type="UniProtKB" id="P03300"/>
    </source>
</evidence>
<evidence type="ECO:0000250" key="3">
    <source>
        <dbReference type="UniProtKB" id="P03301"/>
    </source>
</evidence>
<evidence type="ECO:0000250" key="4">
    <source>
        <dbReference type="UniProtKB" id="P03303"/>
    </source>
</evidence>
<evidence type="ECO:0000250" key="5">
    <source>
        <dbReference type="UniProtKB" id="P03313"/>
    </source>
</evidence>
<evidence type="ECO:0000250" key="6">
    <source>
        <dbReference type="UniProtKB" id="P04936"/>
    </source>
</evidence>
<evidence type="ECO:0000250" key="7">
    <source>
        <dbReference type="UniProtKB" id="Q66478"/>
    </source>
</evidence>
<evidence type="ECO:0000250" key="8">
    <source>
        <dbReference type="UniProtKB" id="Q9QF31"/>
    </source>
</evidence>
<evidence type="ECO:0000255" key="9"/>
<evidence type="ECO:0000255" key="10">
    <source>
        <dbReference type="PROSITE-ProRule" id="PRU00539"/>
    </source>
</evidence>
<evidence type="ECO:0000255" key="11">
    <source>
        <dbReference type="PROSITE-ProRule" id="PRU00551"/>
    </source>
</evidence>
<evidence type="ECO:0000255" key="12">
    <source>
        <dbReference type="PROSITE-ProRule" id="PRU01222"/>
    </source>
</evidence>
<evidence type="ECO:0000305" key="13"/>
<evidence type="ECO:0007829" key="14">
    <source>
        <dbReference type="PDB" id="1BEV"/>
    </source>
</evidence>
<reference key="1">
    <citation type="journal article" date="1988" name="J. Gen. Virol.">
        <title>The complete nucleotide sequence of a bovine enterovirus.</title>
        <authorList>
            <person name="Earle J.A.P."/>
            <person name="Skuce R.A."/>
            <person name="Fleming C.S."/>
            <person name="Hoey E.M."/>
            <person name="Martin S.J."/>
        </authorList>
    </citation>
    <scope>NUCLEOTIDE SEQUENCE [GENOMIC RNA]</scope>
</reference>
<reference key="2">
    <citation type="journal article" date="1995" name="Nat. Struct. Biol.">
        <title>Implications for viral uncoating from the structure of bovine enterovirus.</title>
        <authorList>
            <person name="Smyth M."/>
            <person name="Tate J."/>
            <person name="Hoey E.M."/>
            <person name="Lyons C."/>
            <person name="Martin S.J."/>
            <person name="Stuart D."/>
        </authorList>
    </citation>
    <scope>X-RAY CRYSTALLOGRAPHY (3.0 ANGSTROMS) OF 1-840</scope>
</reference>
<name>POLG_BOVEV</name>
<keyword id="KW-0002">3D-structure</keyword>
<keyword id="KW-1072">Activation of host autophagy by virus</keyword>
<keyword id="KW-0067">ATP-binding</keyword>
<keyword id="KW-0068">Autocatalytic cleavage</keyword>
<keyword id="KW-0167">Capsid protein</keyword>
<keyword id="KW-0191">Covalent protein-RNA linkage</keyword>
<keyword id="KW-0235">DNA replication</keyword>
<keyword id="KW-1262">Eukaryotic host gene expression shutoff by virus</keyword>
<keyword id="KW-1193">Eukaryotic host translation shutoff by virus</keyword>
<keyword id="KW-0347">Helicase</keyword>
<keyword id="KW-1035">Host cytoplasm</keyword>
<keyword id="KW-1036">Host cytoplasmic vesicle</keyword>
<keyword id="KW-1190">Host gene expression shutoff by virus</keyword>
<keyword id="KW-1043">Host membrane</keyword>
<keyword id="KW-1192">Host mRNA suppression by virus</keyword>
<keyword id="KW-1048">Host nucleus</keyword>
<keyword id="KW-0945">Host-virus interaction</keyword>
<keyword id="KW-0378">Hydrolase</keyword>
<keyword id="KW-1090">Inhibition of host innate immune response by virus</keyword>
<keyword id="KW-1099">Inhibition of host mRNA nuclear export by virus</keyword>
<keyword id="KW-1088">Inhibition of host RIG-I by virus</keyword>
<keyword id="KW-1113">Inhibition of host RLR pathway by virus</keyword>
<keyword id="KW-0407">Ion channel</keyword>
<keyword id="KW-0406">Ion transport</keyword>
<keyword id="KW-0449">Lipoprotein</keyword>
<keyword id="KW-0460">Magnesium</keyword>
<keyword id="KW-0472">Membrane</keyword>
<keyword id="KW-0479">Metal-binding</keyword>
<keyword id="KW-0519">Myristate</keyword>
<keyword id="KW-0547">Nucleotide-binding</keyword>
<keyword id="KW-0548">Nucleotidyltransferase</keyword>
<keyword id="KW-0597">Phosphoprotein</keyword>
<keyword id="KW-1172">Pore-mediated penetration of viral genome into host cell</keyword>
<keyword id="KW-0645">Protease</keyword>
<keyword id="KW-0677">Repeat</keyword>
<keyword id="KW-0694">RNA-binding</keyword>
<keyword id="KW-0696">RNA-directed RNA polymerase</keyword>
<keyword id="KW-1143">T=pseudo3 icosahedral capsid protein</keyword>
<keyword id="KW-0788">Thiol protease</keyword>
<keyword id="KW-0808">Transferase</keyword>
<keyword id="KW-0813">Transport</keyword>
<keyword id="KW-1161">Viral attachment to host cell</keyword>
<keyword id="KW-0899">Viral immunoevasion</keyword>
<keyword id="KW-1182">Viral ion channel</keyword>
<keyword id="KW-1162">Viral penetration into host cytoplasm</keyword>
<keyword id="KW-0693">Viral RNA replication</keyword>
<keyword id="KW-0946">Virion</keyword>
<keyword id="KW-1164">Virus endocytosis by host</keyword>
<keyword id="KW-1160">Virus entry into host cell</keyword>
<keyword id="KW-0862">Zinc</keyword>
<keyword id="KW-0863">Zinc-finger</keyword>
<accession>P12915</accession>
<organism>
    <name type="scientific">Bovine enterovirus (strain VG-5-27)</name>
    <name type="common">BEV</name>
    <dbReference type="NCBI Taxonomy" id="12065"/>
    <lineage>
        <taxon>Viruses</taxon>
        <taxon>Riboviria</taxon>
        <taxon>Orthornavirae</taxon>
        <taxon>Pisuviricota</taxon>
        <taxon>Pisoniviricetes</taxon>
        <taxon>Picornavirales</taxon>
        <taxon>Picornaviridae</taxon>
        <taxon>Ensavirinae</taxon>
        <taxon>Enterovirus</taxon>
        <taxon>Enterovirus E</taxon>
    </lineage>
</organism>
<sequence>MGAQLSRNTAGSHTTGTYATGGSTINYNNINYYSHAASAAQNKQDFTQDPSKFTQPIADVIKETAVPLKSPSAEACGYSDRVAQLTLGNSTITTQEAANICVAYGCWPAKLSDTDATSVDKPTEPGVSADAFYTLRSKPWQADSKGWYWKLPDALNNTGMFGQNAQFHYIYRGGWAVHVQCNATKFHQGTLLVLAIPEHQIATQEQPAFDRTMPGSEGGTFQEPFWLEDGTSLGNSLIYPHQWINLRTNNSATLILPYVNAIPMDSAIRHSNWTLAIIPVAPLKYAAETTPLVPITVTIAPMETEYNGLRRAIASNQGLPTKPGPGSYQFMTTDEDCSPCILPDFQPTLEIFIPGKVNNLLEIAQVESILEANNREGVEGVERYVIPVSVQDALDAQIYALRLELGGSGPLSSSLLGTLAKHYTQWSGSVEITCMFTGTFMTTGKVLLAYTPPGGDMPRNREEAMLGTHVVWDFGLQSSITLVIPWISASHFRGVSNDDVLNYQYYAAGHVTIWYQTNMVIPPGFPNTAGIIMMIAAQPNFSFRIQKDREDMTQTAILQNDPGKMLKDAIDKQVAGALVAGTTTSTHSVATDSTPALQAAETGATSTARDESMIETRTIVPTHGIHETSVESFFGRSSLVGMPLLATGTSITNWRIDFREFVQLRAKMSWFTYMRFDVEFTIIATSSTGQNVTTEQHTTYQVMYVPPGAPVPSNQDSFQWQSGCNPSVFADTDGPPAQFSVPFMSSANAYSTVYDGYARFMDTDPDRYGILPSNFLGFMYFRTLEDAAHQVRFRICAKIKHTSCWIPRAPRQAPYKKRYNLVFSGDSDRICSNRASLTSYGPFGQQQGAAYVGSYKILNRHLATYADWENEVWQSYQRDLLVTRVDAHGCDTIARCNCRSGIYYCKSTAKHYPIVVTPPSIYKIEANDYYPERMQTHILLGIGFAEPGDCGGLLRCEHGVMGILTVGGGDHVGFADVRDLLWIEDDAMEQGITDYVQQLGNAFGAGFTAEIANYTNQLRDMLMGSDSVVEKIIRSLVRLVSALVIVVRNHQDLITVGATLALLGCEGSPWKWLKRKVCQILGINMAERQSDNWMKKFTEMCNAFRGLDWIAAKISKFIDWLKQKILPELKERAEFVKKLKQLPLLEAQVNTLEHSSASQERQEQLFGNVQYLAHHCRKNAPLYAAEAKRVYHLEKRVLGAMQFKTKNRIEPVCALIHGSPGTGQSLATMIVGRKLAEYEGSDVYSLPPDPDHFDGYQQQAVVVMDDLLQNPDGKDMTLFCQMVSTAPFTVPMAALEDKGKLFTSKFVLASTNAGQVTPPTVADYKALQRRFFFDCDIEVQKEYKRDGVTLDVAKATETCEDCSPANFKKCMPLICGKALQLKSRKGDGMRYSLDTLISELRRESNRRYNIGNVLEALFQGPVCYKPLRIEVHEEEPAPSAISDLLQAVDSEEVREYCRSKGWIVEERVTELKLERNVNRALAVIQSVSLIAAVAGTIYIVYRLFSGMQGPYSGIGTNYATKKPVVRQVQTQGPLFDFGVSLLKKNIRTVKTGAGEFTALGVYDTVVVLPRHAMPGKTIEMNGKDIEVLDAYDLNDKTDTSLELTIVKLKMNEKFRDIRAMVPDQITDYNEAVVVVNTSYYPQLFTCVGRVKDYGFLNLAGRPTHRVLMYEFPTKAGQCGGVVISMGKIVGVHVGGNGAQGFAASLLRRYFTAEQGQIEYIEKSKDAGYPVINAPTQTKLEPSVFFDVFPGVKEPAVLHKKDKRLETNFEEALFSKYIGNVQRDMPEELLIAIDHYSEQLKMLNIDPRPISMEDAIYGTEGLEALDLGTSASYPYVAMGIKKRDILNKETRDVTKMQECIDKYGLNLPMVTYVKDELRAPDKIRKGKSRLIEASSLNDSVAMRCYFGNLYKVFHTNPGTISGCAVGCDPETFWSKIPVMMDGELFGFDYTAYDASLSPMWFHALAEVLRRIGFVECKHFIDQLCCSHHLYMDKHYYVVGGMPSGCSGTSIFNSMINNLIIRTLVLTVYKNIDLDDLKIIAYGDDVLASYPYEIDASLLAEAGKSFGLIMTPPDKSAEFVKLTWDNVTFLKRKFVRDARYPFLVHPVMDMSNIHESIRWTKDPRHTEDHVRSLCLLAWHCGEEEYNEFVTKIRSVPVGRALHLPSFKALERKWYDSF</sequence>